<accession>P67412</accession>
<accession>Q99TN8</accession>
<keyword id="KW-0067">ATP-binding</keyword>
<keyword id="KW-0963">Cytoplasm</keyword>
<keyword id="KW-0418">Kinase</keyword>
<keyword id="KW-0547">Nucleotide-binding</keyword>
<keyword id="KW-0808">Transferase</keyword>
<proteinExistence type="inferred from homology"/>
<protein>
    <recommendedName>
        <fullName evidence="1">Uridine kinase</fullName>
        <ecNumber evidence="1">2.7.1.48</ecNumber>
    </recommendedName>
    <alternativeName>
        <fullName evidence="1">Cytidine monophosphokinase</fullName>
    </alternativeName>
    <alternativeName>
        <fullName evidence="1">Uridine monophosphokinase</fullName>
    </alternativeName>
</protein>
<comment type="catalytic activity">
    <reaction evidence="1">
        <text>uridine + ATP = UMP + ADP + H(+)</text>
        <dbReference type="Rhea" id="RHEA:16825"/>
        <dbReference type="ChEBI" id="CHEBI:15378"/>
        <dbReference type="ChEBI" id="CHEBI:16704"/>
        <dbReference type="ChEBI" id="CHEBI:30616"/>
        <dbReference type="ChEBI" id="CHEBI:57865"/>
        <dbReference type="ChEBI" id="CHEBI:456216"/>
        <dbReference type="EC" id="2.7.1.48"/>
    </reaction>
</comment>
<comment type="catalytic activity">
    <reaction evidence="1">
        <text>cytidine + ATP = CMP + ADP + H(+)</text>
        <dbReference type="Rhea" id="RHEA:24674"/>
        <dbReference type="ChEBI" id="CHEBI:15378"/>
        <dbReference type="ChEBI" id="CHEBI:17562"/>
        <dbReference type="ChEBI" id="CHEBI:30616"/>
        <dbReference type="ChEBI" id="CHEBI:60377"/>
        <dbReference type="ChEBI" id="CHEBI:456216"/>
        <dbReference type="EC" id="2.7.1.48"/>
    </reaction>
</comment>
<comment type="pathway">
    <text evidence="1">Pyrimidine metabolism; CTP biosynthesis via salvage pathway; CTP from cytidine: step 1/3.</text>
</comment>
<comment type="pathway">
    <text evidence="1">Pyrimidine metabolism; UMP biosynthesis via salvage pathway; UMP from uridine: step 1/1.</text>
</comment>
<comment type="subcellular location">
    <subcellularLocation>
        <location evidence="1">Cytoplasm</location>
    </subcellularLocation>
</comment>
<comment type="similarity">
    <text evidence="1">Belongs to the uridine kinase family.</text>
</comment>
<feature type="chain" id="PRO_0000164493" description="Uridine kinase">
    <location>
        <begin position="1"/>
        <end position="207"/>
    </location>
</feature>
<feature type="binding site" evidence="1">
    <location>
        <begin position="11"/>
        <end position="18"/>
    </location>
    <ligand>
        <name>ATP</name>
        <dbReference type="ChEBI" id="CHEBI:30616"/>
    </ligand>
</feature>
<organism>
    <name type="scientific">Staphylococcus aureus (strain MW2)</name>
    <dbReference type="NCBI Taxonomy" id="196620"/>
    <lineage>
        <taxon>Bacteria</taxon>
        <taxon>Bacillati</taxon>
        <taxon>Bacillota</taxon>
        <taxon>Bacilli</taxon>
        <taxon>Bacillales</taxon>
        <taxon>Staphylococcaceae</taxon>
        <taxon>Staphylococcus</taxon>
    </lineage>
</organism>
<name>URK_STAAW</name>
<dbReference type="EC" id="2.7.1.48" evidence="1"/>
<dbReference type="EMBL" id="BA000033">
    <property type="protein sequence ID" value="BAB95426.1"/>
    <property type="molecule type" value="Genomic_DNA"/>
</dbReference>
<dbReference type="RefSeq" id="WP_000648617.1">
    <property type="nucleotide sequence ID" value="NC_003923.1"/>
</dbReference>
<dbReference type="SMR" id="P67412"/>
<dbReference type="KEGG" id="sam:MW1561"/>
<dbReference type="HOGENOM" id="CLU_021278_1_2_9"/>
<dbReference type="UniPathway" id="UPA00574">
    <property type="reaction ID" value="UER00637"/>
</dbReference>
<dbReference type="UniPathway" id="UPA00579">
    <property type="reaction ID" value="UER00640"/>
</dbReference>
<dbReference type="GO" id="GO:0005737">
    <property type="term" value="C:cytoplasm"/>
    <property type="evidence" value="ECO:0007669"/>
    <property type="project" value="UniProtKB-SubCell"/>
</dbReference>
<dbReference type="GO" id="GO:0005524">
    <property type="term" value="F:ATP binding"/>
    <property type="evidence" value="ECO:0007669"/>
    <property type="project" value="UniProtKB-UniRule"/>
</dbReference>
<dbReference type="GO" id="GO:0043771">
    <property type="term" value="F:cytidine kinase activity"/>
    <property type="evidence" value="ECO:0007669"/>
    <property type="project" value="RHEA"/>
</dbReference>
<dbReference type="GO" id="GO:0004849">
    <property type="term" value="F:uridine kinase activity"/>
    <property type="evidence" value="ECO:0007669"/>
    <property type="project" value="UniProtKB-UniRule"/>
</dbReference>
<dbReference type="GO" id="GO:0044211">
    <property type="term" value="P:CTP salvage"/>
    <property type="evidence" value="ECO:0007669"/>
    <property type="project" value="UniProtKB-UniRule"/>
</dbReference>
<dbReference type="GO" id="GO:0044206">
    <property type="term" value="P:UMP salvage"/>
    <property type="evidence" value="ECO:0007669"/>
    <property type="project" value="UniProtKB-UniRule"/>
</dbReference>
<dbReference type="CDD" id="cd02023">
    <property type="entry name" value="UMPK"/>
    <property type="match status" value="1"/>
</dbReference>
<dbReference type="Gene3D" id="3.40.50.300">
    <property type="entry name" value="P-loop containing nucleotide triphosphate hydrolases"/>
    <property type="match status" value="1"/>
</dbReference>
<dbReference type="HAMAP" id="MF_00551">
    <property type="entry name" value="Uridine_kinase"/>
    <property type="match status" value="1"/>
</dbReference>
<dbReference type="InterPro" id="IPR027417">
    <property type="entry name" value="P-loop_NTPase"/>
</dbReference>
<dbReference type="InterPro" id="IPR006083">
    <property type="entry name" value="PRK/URK"/>
</dbReference>
<dbReference type="InterPro" id="IPR026008">
    <property type="entry name" value="Uridine_kinase"/>
</dbReference>
<dbReference type="InterPro" id="IPR000764">
    <property type="entry name" value="Uridine_kinase-like"/>
</dbReference>
<dbReference type="NCBIfam" id="NF004018">
    <property type="entry name" value="PRK05480.1"/>
    <property type="match status" value="1"/>
</dbReference>
<dbReference type="NCBIfam" id="TIGR00235">
    <property type="entry name" value="udk"/>
    <property type="match status" value="1"/>
</dbReference>
<dbReference type="PANTHER" id="PTHR10285">
    <property type="entry name" value="URIDINE KINASE"/>
    <property type="match status" value="1"/>
</dbReference>
<dbReference type="Pfam" id="PF00485">
    <property type="entry name" value="PRK"/>
    <property type="match status" value="1"/>
</dbReference>
<dbReference type="PRINTS" id="PR00988">
    <property type="entry name" value="URIDINKINASE"/>
</dbReference>
<dbReference type="SUPFAM" id="SSF52540">
    <property type="entry name" value="P-loop containing nucleoside triphosphate hydrolases"/>
    <property type="match status" value="1"/>
</dbReference>
<sequence>MKATTIIGIAGGSGSGKTTVTNEIMKNLEGHSVALLAQDYYYKDQKHLTFDERLETNYDHPFAFDNDLLIENLKDLKNGKAVEVPTYDYASHTRSDITIDFKPKDVIIVEGIFALENKVLRDMMDVKIYVDTDADLRILRRLTRDTKERGRSMDSVINQYLSVVRPMHDQFIEPTKKYADIIIPEGGSNKVAIDIMTTKIQSLVSKQ</sequence>
<reference key="1">
    <citation type="journal article" date="2002" name="Lancet">
        <title>Genome and virulence determinants of high virulence community-acquired MRSA.</title>
        <authorList>
            <person name="Baba T."/>
            <person name="Takeuchi F."/>
            <person name="Kuroda M."/>
            <person name="Yuzawa H."/>
            <person name="Aoki K."/>
            <person name="Oguchi A."/>
            <person name="Nagai Y."/>
            <person name="Iwama N."/>
            <person name="Asano K."/>
            <person name="Naimi T."/>
            <person name="Kuroda H."/>
            <person name="Cui L."/>
            <person name="Yamamoto K."/>
            <person name="Hiramatsu K."/>
        </authorList>
    </citation>
    <scope>NUCLEOTIDE SEQUENCE [LARGE SCALE GENOMIC DNA]</scope>
    <source>
        <strain>MW2</strain>
    </source>
</reference>
<evidence type="ECO:0000255" key="1">
    <source>
        <dbReference type="HAMAP-Rule" id="MF_00551"/>
    </source>
</evidence>
<gene>
    <name evidence="1" type="primary">udk</name>
    <name type="ordered locus">MW1561</name>
</gene>